<gene>
    <name type="ordered locus">At4g22235</name>
    <name type="ORF">T10I14.11</name>
</gene>
<proteinExistence type="inferred from homology"/>
<reference key="1">
    <citation type="journal article" date="1999" name="Nature">
        <title>Sequence and analysis of chromosome 4 of the plant Arabidopsis thaliana.</title>
        <authorList>
            <person name="Mayer K.F.X."/>
            <person name="Schueller C."/>
            <person name="Wambutt R."/>
            <person name="Murphy G."/>
            <person name="Volckaert G."/>
            <person name="Pohl T."/>
            <person name="Duesterhoeft A."/>
            <person name="Stiekema W."/>
            <person name="Entian K.-D."/>
            <person name="Terryn N."/>
            <person name="Harris B."/>
            <person name="Ansorge W."/>
            <person name="Brandt P."/>
            <person name="Grivell L.A."/>
            <person name="Rieger M."/>
            <person name="Weichselgartner M."/>
            <person name="de Simone V."/>
            <person name="Obermaier B."/>
            <person name="Mache R."/>
            <person name="Mueller M."/>
            <person name="Kreis M."/>
            <person name="Delseny M."/>
            <person name="Puigdomenech P."/>
            <person name="Watson M."/>
            <person name="Schmidtheini T."/>
            <person name="Reichert B."/>
            <person name="Portetelle D."/>
            <person name="Perez-Alonso M."/>
            <person name="Boutry M."/>
            <person name="Bancroft I."/>
            <person name="Vos P."/>
            <person name="Hoheisel J."/>
            <person name="Zimmermann W."/>
            <person name="Wedler H."/>
            <person name="Ridley P."/>
            <person name="Langham S.-A."/>
            <person name="McCullagh B."/>
            <person name="Bilham L."/>
            <person name="Robben J."/>
            <person name="van der Schueren J."/>
            <person name="Grymonprez B."/>
            <person name="Chuang Y.-J."/>
            <person name="Vandenbussche F."/>
            <person name="Braeken M."/>
            <person name="Weltjens I."/>
            <person name="Voet M."/>
            <person name="Bastiaens I."/>
            <person name="Aert R."/>
            <person name="Defoor E."/>
            <person name="Weitzenegger T."/>
            <person name="Bothe G."/>
            <person name="Ramsperger U."/>
            <person name="Hilbert H."/>
            <person name="Braun M."/>
            <person name="Holzer E."/>
            <person name="Brandt A."/>
            <person name="Peters S."/>
            <person name="van Staveren M."/>
            <person name="Dirkse W."/>
            <person name="Mooijman P."/>
            <person name="Klein Lankhorst R."/>
            <person name="Rose M."/>
            <person name="Hauf J."/>
            <person name="Koetter P."/>
            <person name="Berneiser S."/>
            <person name="Hempel S."/>
            <person name="Feldpausch M."/>
            <person name="Lamberth S."/>
            <person name="Van den Daele H."/>
            <person name="De Keyser A."/>
            <person name="Buysshaert C."/>
            <person name="Gielen J."/>
            <person name="Villarroel R."/>
            <person name="De Clercq R."/>
            <person name="van Montagu M."/>
            <person name="Rogers J."/>
            <person name="Cronin A."/>
            <person name="Quail M.A."/>
            <person name="Bray-Allen S."/>
            <person name="Clark L."/>
            <person name="Doggett J."/>
            <person name="Hall S."/>
            <person name="Kay M."/>
            <person name="Lennard N."/>
            <person name="McLay K."/>
            <person name="Mayes R."/>
            <person name="Pettett A."/>
            <person name="Rajandream M.A."/>
            <person name="Lyne M."/>
            <person name="Benes V."/>
            <person name="Rechmann S."/>
            <person name="Borkova D."/>
            <person name="Bloecker H."/>
            <person name="Scharfe M."/>
            <person name="Grimm M."/>
            <person name="Loehnert T.-H."/>
            <person name="Dose S."/>
            <person name="de Haan M."/>
            <person name="Maarse A.C."/>
            <person name="Schaefer M."/>
            <person name="Mueller-Auer S."/>
            <person name="Gabel C."/>
            <person name="Fuchs M."/>
            <person name="Fartmann B."/>
            <person name="Granderath K."/>
            <person name="Dauner D."/>
            <person name="Herzl A."/>
            <person name="Neumann S."/>
            <person name="Argiriou A."/>
            <person name="Vitale D."/>
            <person name="Liguori R."/>
            <person name="Piravandi E."/>
            <person name="Massenet O."/>
            <person name="Quigley F."/>
            <person name="Clabauld G."/>
            <person name="Muendlein A."/>
            <person name="Felber R."/>
            <person name="Schnabl S."/>
            <person name="Hiller R."/>
            <person name="Schmidt W."/>
            <person name="Lecharny A."/>
            <person name="Aubourg S."/>
            <person name="Chefdor F."/>
            <person name="Cooke R."/>
            <person name="Berger C."/>
            <person name="Monfort A."/>
            <person name="Casacuberta E."/>
            <person name="Gibbons T."/>
            <person name="Weber N."/>
            <person name="Vandenbol M."/>
            <person name="Bargues M."/>
            <person name="Terol J."/>
            <person name="Torres A."/>
            <person name="Perez-Perez A."/>
            <person name="Purnelle B."/>
            <person name="Bent E."/>
            <person name="Johnson S."/>
            <person name="Tacon D."/>
            <person name="Jesse T."/>
            <person name="Heijnen L."/>
            <person name="Schwarz S."/>
            <person name="Scholler P."/>
            <person name="Heber S."/>
            <person name="Francs P."/>
            <person name="Bielke C."/>
            <person name="Frishman D."/>
            <person name="Haase D."/>
            <person name="Lemcke K."/>
            <person name="Mewes H.-W."/>
            <person name="Stocker S."/>
            <person name="Zaccaria P."/>
            <person name="Bevan M."/>
            <person name="Wilson R.K."/>
            <person name="de la Bastide M."/>
            <person name="Habermann K."/>
            <person name="Parnell L."/>
            <person name="Dedhia N."/>
            <person name="Gnoj L."/>
            <person name="Schutz K."/>
            <person name="Huang E."/>
            <person name="Spiegel L."/>
            <person name="Sekhon M."/>
            <person name="Murray J."/>
            <person name="Sheet P."/>
            <person name="Cordes M."/>
            <person name="Abu-Threideh J."/>
            <person name="Stoneking T."/>
            <person name="Kalicki J."/>
            <person name="Graves T."/>
            <person name="Harmon G."/>
            <person name="Edwards J."/>
            <person name="Latreille P."/>
            <person name="Courtney L."/>
            <person name="Cloud J."/>
            <person name="Abbott A."/>
            <person name="Scott K."/>
            <person name="Johnson D."/>
            <person name="Minx P."/>
            <person name="Bentley D."/>
            <person name="Fulton B."/>
            <person name="Miller N."/>
            <person name="Greco T."/>
            <person name="Kemp K."/>
            <person name="Kramer J."/>
            <person name="Fulton L."/>
            <person name="Mardis E."/>
            <person name="Dante M."/>
            <person name="Pepin K."/>
            <person name="Hillier L.W."/>
            <person name="Nelson J."/>
            <person name="Spieth J."/>
            <person name="Ryan E."/>
            <person name="Andrews S."/>
            <person name="Geisel C."/>
            <person name="Layman D."/>
            <person name="Du H."/>
            <person name="Ali J."/>
            <person name="Berghoff A."/>
            <person name="Jones K."/>
            <person name="Drone K."/>
            <person name="Cotton M."/>
            <person name="Joshu C."/>
            <person name="Antonoiu B."/>
            <person name="Zidanic M."/>
            <person name="Strong C."/>
            <person name="Sun H."/>
            <person name="Lamar B."/>
            <person name="Yordan C."/>
            <person name="Ma P."/>
            <person name="Zhong J."/>
            <person name="Preston R."/>
            <person name="Vil D."/>
            <person name="Shekher M."/>
            <person name="Matero A."/>
            <person name="Shah R."/>
            <person name="Swaby I.K."/>
            <person name="O'Shaughnessy A."/>
            <person name="Rodriguez M."/>
            <person name="Hoffman J."/>
            <person name="Till S."/>
            <person name="Granat S."/>
            <person name="Shohdy N."/>
            <person name="Hasegawa A."/>
            <person name="Hameed A."/>
            <person name="Lodhi M."/>
            <person name="Johnson A."/>
            <person name="Chen E."/>
            <person name="Marra M.A."/>
            <person name="Martienssen R."/>
            <person name="McCombie W.R."/>
        </authorList>
    </citation>
    <scope>NUCLEOTIDE SEQUENCE [LARGE SCALE GENOMIC DNA]</scope>
    <source>
        <strain>cv. Columbia</strain>
    </source>
</reference>
<reference key="2">
    <citation type="journal article" date="2017" name="Plant J.">
        <title>Araport11: a complete reannotation of the Arabidopsis thaliana reference genome.</title>
        <authorList>
            <person name="Cheng C.Y."/>
            <person name="Krishnakumar V."/>
            <person name="Chan A.P."/>
            <person name="Thibaud-Nissen F."/>
            <person name="Schobel S."/>
            <person name="Town C.D."/>
        </authorList>
    </citation>
    <scope>GENOME REANNOTATION</scope>
    <source>
        <strain>cv. Columbia</strain>
    </source>
</reference>
<reference key="3">
    <citation type="submission" date="2004-02" db="EMBL/GenBank/DDBJ databases">
        <title>Arabidopsis ORF clones.</title>
        <authorList>
            <person name="Shinn P."/>
            <person name="Chen H."/>
            <person name="Cheuk R.F."/>
            <person name="Kim C.J."/>
            <person name="Ecker J.R."/>
        </authorList>
    </citation>
    <scope>NUCLEOTIDE SEQUENCE [LARGE SCALE MRNA]</scope>
    <source>
        <strain>cv. Columbia</strain>
    </source>
</reference>
<reference key="4">
    <citation type="journal article" date="2005" name="Plant Physiol.">
        <title>Genome organization of more than 300 defensin-like genes in Arabidopsis.</title>
        <authorList>
            <person name="Silverstein K.A.T."/>
            <person name="Graham M.A."/>
            <person name="Paape T.D."/>
            <person name="VandenBosch K.A."/>
        </authorList>
    </citation>
    <scope>GENE FAMILY</scope>
</reference>
<feature type="signal peptide" evidence="2">
    <location>
        <begin position="1"/>
        <end position="27"/>
    </location>
</feature>
<feature type="chain" id="PRO_0000379659" description="Defensin-like protein 95">
    <location>
        <begin position="28"/>
        <end position="91"/>
    </location>
</feature>
<feature type="disulfide bond" evidence="1">
    <location>
        <begin position="31"/>
        <end position="76"/>
    </location>
</feature>
<feature type="disulfide bond" evidence="1">
    <location>
        <begin position="38"/>
        <end position="63"/>
    </location>
</feature>
<feature type="disulfide bond" evidence="1">
    <location>
        <begin position="47"/>
        <end position="73"/>
    </location>
</feature>
<feature type="disulfide bond" evidence="1">
    <location>
        <begin position="51"/>
        <end position="75"/>
    </location>
</feature>
<name>DEF95_ARATH</name>
<accession>Q6NMS3</accession>
<accession>O49628</accession>
<keyword id="KW-0025">Alternative splicing</keyword>
<keyword id="KW-0929">Antimicrobial</keyword>
<keyword id="KW-1015">Disulfide bond</keyword>
<keyword id="KW-0295">Fungicide</keyword>
<keyword id="KW-0611">Plant defense</keyword>
<keyword id="KW-1185">Reference proteome</keyword>
<keyword id="KW-0964">Secreted</keyword>
<keyword id="KW-0732">Signal</keyword>
<evidence type="ECO:0000250" key="1"/>
<evidence type="ECO:0000255" key="2"/>
<evidence type="ECO:0000305" key="3"/>
<organism>
    <name type="scientific">Arabidopsis thaliana</name>
    <name type="common">Mouse-ear cress</name>
    <dbReference type="NCBI Taxonomy" id="3702"/>
    <lineage>
        <taxon>Eukaryota</taxon>
        <taxon>Viridiplantae</taxon>
        <taxon>Streptophyta</taxon>
        <taxon>Embryophyta</taxon>
        <taxon>Tracheophyta</taxon>
        <taxon>Spermatophyta</taxon>
        <taxon>Magnoliopsida</taxon>
        <taxon>eudicotyledons</taxon>
        <taxon>Gunneridae</taxon>
        <taxon>Pentapetalae</taxon>
        <taxon>rosids</taxon>
        <taxon>malvids</taxon>
        <taxon>Brassicales</taxon>
        <taxon>Brassicaceae</taxon>
        <taxon>Camelineae</taxon>
        <taxon>Arabidopsis</taxon>
    </lineage>
</organism>
<dbReference type="EMBL" id="AL021712">
    <property type="protein sequence ID" value="CAA16773.1"/>
    <property type="status" value="ALT_SEQ"/>
    <property type="molecule type" value="Genomic_DNA"/>
</dbReference>
<dbReference type="EMBL" id="AL161556">
    <property type="protein sequence ID" value="CAB79178.1"/>
    <property type="status" value="ALT_SEQ"/>
    <property type="molecule type" value="Genomic_DNA"/>
</dbReference>
<dbReference type="EMBL" id="CP002687">
    <property type="protein sequence ID" value="AEE84579.1"/>
    <property type="molecule type" value="Genomic_DNA"/>
</dbReference>
<dbReference type="EMBL" id="BT010916">
    <property type="protein sequence ID" value="AAR24694.1"/>
    <property type="molecule type" value="mRNA"/>
</dbReference>
<dbReference type="EMBL" id="BT011583">
    <property type="protein sequence ID" value="AAS46636.1"/>
    <property type="molecule type" value="mRNA"/>
</dbReference>
<dbReference type="PIR" id="T04904">
    <property type="entry name" value="T04904"/>
</dbReference>
<dbReference type="RefSeq" id="NP_567657.1">
    <molecule id="Q6NMS3-1"/>
    <property type="nucleotide sequence ID" value="NM_118349.3"/>
</dbReference>
<dbReference type="BioGRID" id="13607">
    <property type="interactions" value="1"/>
</dbReference>
<dbReference type="IntAct" id="Q6NMS3">
    <property type="interactions" value="1"/>
</dbReference>
<dbReference type="STRING" id="3702.Q6NMS3"/>
<dbReference type="PaxDb" id="3702-AT4G22235.1"/>
<dbReference type="ProteomicsDB" id="222201">
    <molecule id="Q6NMS3-1"/>
</dbReference>
<dbReference type="EnsemblPlants" id="AT4G22235.1">
    <molecule id="Q6NMS3-1"/>
    <property type="protein sequence ID" value="AT4G22235.1"/>
    <property type="gene ID" value="AT4G22235"/>
</dbReference>
<dbReference type="GeneID" id="828318"/>
<dbReference type="Gramene" id="AT4G22235.1">
    <molecule id="Q6NMS3-1"/>
    <property type="protein sequence ID" value="AT4G22235.1"/>
    <property type="gene ID" value="AT4G22235"/>
</dbReference>
<dbReference type="KEGG" id="ath:AT4G22235"/>
<dbReference type="Araport" id="AT4G22235"/>
<dbReference type="TAIR" id="AT4G22235"/>
<dbReference type="HOGENOM" id="CLU_2416305_0_0_1"/>
<dbReference type="InParanoid" id="Q6NMS3"/>
<dbReference type="OMA" id="TCDEPCK"/>
<dbReference type="PhylomeDB" id="Q6NMS3"/>
<dbReference type="PRO" id="PR:Q6NMS3"/>
<dbReference type="Proteomes" id="UP000006548">
    <property type="component" value="Chromosome 4"/>
</dbReference>
<dbReference type="ExpressionAtlas" id="Q6NMS3">
    <property type="expression patterns" value="baseline and differential"/>
</dbReference>
<dbReference type="GO" id="GO:0005576">
    <property type="term" value="C:extracellular region"/>
    <property type="evidence" value="ECO:0007669"/>
    <property type="project" value="UniProtKB-SubCell"/>
</dbReference>
<dbReference type="GO" id="GO:0050832">
    <property type="term" value="P:defense response to fungus"/>
    <property type="evidence" value="ECO:0007669"/>
    <property type="project" value="UniProtKB-KW"/>
</dbReference>
<dbReference type="GO" id="GO:0031640">
    <property type="term" value="P:killing of cells of another organism"/>
    <property type="evidence" value="ECO:0007669"/>
    <property type="project" value="UniProtKB-KW"/>
</dbReference>
<comment type="subcellular location">
    <subcellularLocation>
        <location evidence="1">Secreted</location>
    </subcellularLocation>
</comment>
<comment type="alternative products">
    <event type="alternative splicing"/>
    <isoform>
        <id>Q6NMS3-1</id>
        <name>1</name>
        <sequence type="displayed"/>
    </isoform>
    <text>A number of isoforms are produced. According to EST sequences.</text>
</comment>
<comment type="similarity">
    <text evidence="3">Belongs to the DEFL family.</text>
</comment>
<comment type="sequence caution" evidence="3">
    <conflict type="erroneous gene model prediction">
        <sequence resource="EMBL-CDS" id="CAA16773"/>
    </conflict>
    <text>The predicted gene has been split into 2 genes: At4g22230 and At4g22235.</text>
</comment>
<comment type="sequence caution" evidence="3">
    <conflict type="erroneous gene model prediction">
        <sequence resource="EMBL-CDS" id="CAB79178"/>
    </conflict>
    <text>The predicted gene has been split into 2 genes: At4g22230 and At4g22235.</text>
</comment>
<protein>
    <recommendedName>
        <fullName>Defensin-like protein 95</fullName>
    </recommendedName>
</protein>
<sequence length="91" mass="9689">MGSLKLSTFAIVVCLSILLISPIEVNGWGKCDLRKGLCRLADTISTCDVPCRAVDSKYHGGECLNVGGGQGICWCCRDYDAAKSGAEKESM</sequence>